<feature type="chain" id="PRO_0000441045" description="Sperm microtubule inner protein 11">
    <location>
        <begin position="1"/>
        <end position="131"/>
    </location>
</feature>
<feature type="region of interest" description="Disordered" evidence="2">
    <location>
        <begin position="18"/>
        <end position="44"/>
    </location>
</feature>
<feature type="compositionally biased region" description="Basic and acidic residues" evidence="2">
    <location>
        <begin position="21"/>
        <end position="33"/>
    </location>
</feature>
<protein>
    <recommendedName>
        <fullName evidence="4">Sperm microtubule inner protein 11</fullName>
    </recommendedName>
    <alternativeName>
        <fullName evidence="3">Testis-expressed protein 49</fullName>
    </alternativeName>
</protein>
<dbReference type="EMBL" id="AC009775">
    <property type="status" value="NOT_ANNOTATED_CDS"/>
    <property type="molecule type" value="Genomic_DNA"/>
</dbReference>
<dbReference type="EMBL" id="AC079951">
    <property type="status" value="NOT_ANNOTATED_CDS"/>
    <property type="molecule type" value="Genomic_DNA"/>
</dbReference>
<dbReference type="EMBL" id="AC117498">
    <property type="status" value="NOT_ANNOTATED_CDS"/>
    <property type="molecule type" value="Genomic_DNA"/>
</dbReference>
<dbReference type="EMBL" id="KF455648">
    <property type="status" value="NOT_ANNOTATED_CDS"/>
    <property type="molecule type" value="Genomic_DNA"/>
</dbReference>
<dbReference type="CCDS" id="CCDS86296.1"/>
<dbReference type="RefSeq" id="NP_001338052.1">
    <property type="nucleotide sequence ID" value="NM_001351123.2"/>
</dbReference>
<dbReference type="SMR" id="A0A1B0GTD5"/>
<dbReference type="PhosphoSitePlus" id="A0A1B0GTD5"/>
<dbReference type="BioMuta" id="TEX49"/>
<dbReference type="MassIVE" id="A0A1B0GTD5"/>
<dbReference type="PeptideAtlas" id="A0A1B0GTD5"/>
<dbReference type="Antibodypedia" id="81815">
    <property type="antibodies" value="2 antibodies from 2 providers"/>
</dbReference>
<dbReference type="Ensembl" id="ENST00000548380.6">
    <property type="protein sequence ID" value="ENSP00000489652.1"/>
    <property type="gene ID" value="ENSG00000257987.6"/>
</dbReference>
<dbReference type="GeneID" id="255411"/>
<dbReference type="MANE-Select" id="ENST00000548380.6">
    <property type="protein sequence ID" value="ENSP00000489652.1"/>
    <property type="RefSeq nucleotide sequence ID" value="NM_001351123.2"/>
    <property type="RefSeq protein sequence ID" value="NP_001338052.1"/>
</dbReference>
<dbReference type="AGR" id="HGNC:48628"/>
<dbReference type="GeneCards" id="SPMIP11"/>
<dbReference type="HGNC" id="HGNC:48628">
    <property type="gene designation" value="SPMIP11"/>
</dbReference>
<dbReference type="HPA" id="ENSG00000257987">
    <property type="expression patterns" value="Tissue enriched (testis)"/>
</dbReference>
<dbReference type="MalaCards" id="SPMIP11"/>
<dbReference type="neXtProt" id="NX_A0A1B0GTD5"/>
<dbReference type="OpenTargets" id="ENSG00000257987"/>
<dbReference type="VEuPathDB" id="HostDB:ENSG00000257987"/>
<dbReference type="GeneTree" id="ENSGT00390000010327"/>
<dbReference type="InParanoid" id="A0A1B0GTD5"/>
<dbReference type="OMA" id="DHCILND"/>
<dbReference type="OrthoDB" id="7085216at2759"/>
<dbReference type="PAN-GO" id="A0A1B0GTD5">
    <property type="GO annotations" value="0 GO annotations based on evolutionary models"/>
</dbReference>
<dbReference type="PhylomeDB" id="A0A1B0GTD5"/>
<dbReference type="ChiTaRS" id="TEX49">
    <property type="organism name" value="human"/>
</dbReference>
<dbReference type="Pharos" id="A0A1B0GTD5">
    <property type="development level" value="Tdark"/>
</dbReference>
<dbReference type="PRO" id="PR:A0A1B0GTD5"/>
<dbReference type="Proteomes" id="UP000005640">
    <property type="component" value="Chromosome 12"/>
</dbReference>
<dbReference type="RNAct" id="A0A1B0GTD5">
    <property type="molecule type" value="protein"/>
</dbReference>
<dbReference type="Bgee" id="ENSG00000257987">
    <property type="expression patterns" value="Expressed in male germ line stem cell (sensu Vertebrata) in testis and 55 other cell types or tissues"/>
</dbReference>
<dbReference type="ExpressionAtlas" id="A0A1B0GTD5">
    <property type="expression patterns" value="baseline and differential"/>
</dbReference>
<dbReference type="GO" id="GO:0160111">
    <property type="term" value="C:axonemal A tubule inner sheath"/>
    <property type="evidence" value="ECO:0000318"/>
    <property type="project" value="GO_Central"/>
</dbReference>
<dbReference type="GO" id="GO:0036126">
    <property type="term" value="C:sperm flagellum"/>
    <property type="evidence" value="ECO:0007669"/>
    <property type="project" value="Ensembl"/>
</dbReference>
<dbReference type="GO" id="GO:0030317">
    <property type="term" value="P:flagellated sperm motility"/>
    <property type="evidence" value="ECO:0007669"/>
    <property type="project" value="Ensembl"/>
</dbReference>
<dbReference type="InterPro" id="IPR038775">
    <property type="entry name" value="SPMIP11"/>
</dbReference>
<dbReference type="PANTHER" id="PTHR35263">
    <property type="entry name" value="TESTIS-EXPRESSED PROTEIN 49"/>
    <property type="match status" value="1"/>
</dbReference>
<dbReference type="PANTHER" id="PTHR35263:SF1">
    <property type="entry name" value="TESTIS-EXPRESSED PROTEIN 49"/>
    <property type="match status" value="1"/>
</dbReference>
<dbReference type="Pfam" id="PF22593">
    <property type="entry name" value="SPMIP11"/>
    <property type="match status" value="1"/>
</dbReference>
<accession>A0A1B0GTD5</accession>
<sequence>MAFFNLYLLGYQNSFQNKKRNTTEETNQKEPEPTRLPPIISKDGNYSVHQNSHTRYHEAVRKVLLKTFPNQVFRIPLTDAQNFSFWWSHDPGVRPEETMPWIRSPRHCLIKSAMTRFMDHSILNDRTFSLY</sequence>
<proteinExistence type="evidence at protein level"/>
<evidence type="ECO:0000250" key="1">
    <source>
        <dbReference type="UniProtKB" id="A0A3Q1MT14"/>
    </source>
</evidence>
<evidence type="ECO:0000256" key="2">
    <source>
        <dbReference type="SAM" id="MobiDB-lite"/>
    </source>
</evidence>
<evidence type="ECO:0000305" key="3"/>
<evidence type="ECO:0000312" key="4">
    <source>
        <dbReference type="HGNC" id="HGNC:48628"/>
    </source>
</evidence>
<reference key="1">
    <citation type="journal article" date="2006" name="Nature">
        <title>The finished DNA sequence of human chromosome 12.</title>
        <authorList>
            <person name="Scherer S.E."/>
            <person name="Muzny D.M."/>
            <person name="Buhay C.J."/>
            <person name="Chen R."/>
            <person name="Cree A."/>
            <person name="Ding Y."/>
            <person name="Dugan-Rocha S."/>
            <person name="Gill R."/>
            <person name="Gunaratne P."/>
            <person name="Harris R.A."/>
            <person name="Hawes A.C."/>
            <person name="Hernandez J."/>
            <person name="Hodgson A.V."/>
            <person name="Hume J."/>
            <person name="Jackson A."/>
            <person name="Khan Z.M."/>
            <person name="Kovar-Smith C."/>
            <person name="Lewis L.R."/>
            <person name="Lozado R.J."/>
            <person name="Metzker M.L."/>
            <person name="Milosavljevic A."/>
            <person name="Miner G.R."/>
            <person name="Montgomery K.T."/>
            <person name="Morgan M.B."/>
            <person name="Nazareth L.V."/>
            <person name="Scott G."/>
            <person name="Sodergren E."/>
            <person name="Song X.-Z."/>
            <person name="Steffen D."/>
            <person name="Lovering R.C."/>
            <person name="Wheeler D.A."/>
            <person name="Worley K.C."/>
            <person name="Yuan Y."/>
            <person name="Zhang Z."/>
            <person name="Adams C.Q."/>
            <person name="Ansari-Lari M.A."/>
            <person name="Ayele M."/>
            <person name="Brown M.J."/>
            <person name="Chen G."/>
            <person name="Chen Z."/>
            <person name="Clerc-Blankenburg K.P."/>
            <person name="Davis C."/>
            <person name="Delgado O."/>
            <person name="Dinh H.H."/>
            <person name="Draper H."/>
            <person name="Gonzalez-Garay M.L."/>
            <person name="Havlak P."/>
            <person name="Jackson L.R."/>
            <person name="Jacob L.S."/>
            <person name="Kelly S.H."/>
            <person name="Li L."/>
            <person name="Li Z."/>
            <person name="Liu J."/>
            <person name="Liu W."/>
            <person name="Lu J."/>
            <person name="Maheshwari M."/>
            <person name="Nguyen B.-V."/>
            <person name="Okwuonu G.O."/>
            <person name="Pasternak S."/>
            <person name="Perez L.M."/>
            <person name="Plopper F.J.H."/>
            <person name="Santibanez J."/>
            <person name="Shen H."/>
            <person name="Tabor P.E."/>
            <person name="Verduzco D."/>
            <person name="Waldron L."/>
            <person name="Wang Q."/>
            <person name="Williams G.A."/>
            <person name="Zhang J."/>
            <person name="Zhou J."/>
            <person name="Allen C.C."/>
            <person name="Amin A.G."/>
            <person name="Anyalebechi V."/>
            <person name="Bailey M."/>
            <person name="Barbaria J.A."/>
            <person name="Bimage K.E."/>
            <person name="Bryant N.P."/>
            <person name="Burch P.E."/>
            <person name="Burkett C.E."/>
            <person name="Burrell K.L."/>
            <person name="Calderon E."/>
            <person name="Cardenas V."/>
            <person name="Carter K."/>
            <person name="Casias K."/>
            <person name="Cavazos I."/>
            <person name="Cavazos S.R."/>
            <person name="Ceasar H."/>
            <person name="Chacko J."/>
            <person name="Chan S.N."/>
            <person name="Chavez D."/>
            <person name="Christopoulos C."/>
            <person name="Chu J."/>
            <person name="Cockrell R."/>
            <person name="Cox C.D."/>
            <person name="Dang M."/>
            <person name="Dathorne S.R."/>
            <person name="David R."/>
            <person name="Davis C.M."/>
            <person name="Davy-Carroll L."/>
            <person name="Deshazo D.R."/>
            <person name="Donlin J.E."/>
            <person name="D'Souza L."/>
            <person name="Eaves K.A."/>
            <person name="Egan A."/>
            <person name="Emery-Cohen A.J."/>
            <person name="Escotto M."/>
            <person name="Flagg N."/>
            <person name="Forbes L.D."/>
            <person name="Gabisi A.M."/>
            <person name="Garza M."/>
            <person name="Hamilton C."/>
            <person name="Henderson N."/>
            <person name="Hernandez O."/>
            <person name="Hines S."/>
            <person name="Hogues M.E."/>
            <person name="Huang M."/>
            <person name="Idlebird D.G."/>
            <person name="Johnson R."/>
            <person name="Jolivet A."/>
            <person name="Jones S."/>
            <person name="Kagan R."/>
            <person name="King L.M."/>
            <person name="Leal B."/>
            <person name="Lebow H."/>
            <person name="Lee S."/>
            <person name="LeVan J.M."/>
            <person name="Lewis L.C."/>
            <person name="London P."/>
            <person name="Lorensuhewa L.M."/>
            <person name="Loulseged H."/>
            <person name="Lovett D.A."/>
            <person name="Lucier A."/>
            <person name="Lucier R.L."/>
            <person name="Ma J."/>
            <person name="Madu R.C."/>
            <person name="Mapua P."/>
            <person name="Martindale A.D."/>
            <person name="Martinez E."/>
            <person name="Massey E."/>
            <person name="Mawhiney S."/>
            <person name="Meador M.G."/>
            <person name="Mendez S."/>
            <person name="Mercado C."/>
            <person name="Mercado I.C."/>
            <person name="Merritt C.E."/>
            <person name="Miner Z.L."/>
            <person name="Minja E."/>
            <person name="Mitchell T."/>
            <person name="Mohabbat F."/>
            <person name="Mohabbat K."/>
            <person name="Montgomery B."/>
            <person name="Moore N."/>
            <person name="Morris S."/>
            <person name="Munidasa M."/>
            <person name="Ngo R.N."/>
            <person name="Nguyen N.B."/>
            <person name="Nickerson E."/>
            <person name="Nwaokelemeh O.O."/>
            <person name="Nwokenkwo S."/>
            <person name="Obregon M."/>
            <person name="Oguh M."/>
            <person name="Oragunye N."/>
            <person name="Oviedo R.J."/>
            <person name="Parish B.J."/>
            <person name="Parker D.N."/>
            <person name="Parrish J."/>
            <person name="Parks K.L."/>
            <person name="Paul H.A."/>
            <person name="Payton B.A."/>
            <person name="Perez A."/>
            <person name="Perrin W."/>
            <person name="Pickens A."/>
            <person name="Primus E.L."/>
            <person name="Pu L.-L."/>
            <person name="Puazo M."/>
            <person name="Quiles M.M."/>
            <person name="Quiroz J.B."/>
            <person name="Rabata D."/>
            <person name="Reeves K."/>
            <person name="Ruiz S.J."/>
            <person name="Shao H."/>
            <person name="Sisson I."/>
            <person name="Sonaike T."/>
            <person name="Sorelle R.P."/>
            <person name="Sutton A.E."/>
            <person name="Svatek A.F."/>
            <person name="Svetz L.A."/>
            <person name="Tamerisa K.S."/>
            <person name="Taylor T.R."/>
            <person name="Teague B."/>
            <person name="Thomas N."/>
            <person name="Thorn R.D."/>
            <person name="Trejos Z.Y."/>
            <person name="Trevino B.K."/>
            <person name="Ukegbu O.N."/>
            <person name="Urban J.B."/>
            <person name="Vasquez L.I."/>
            <person name="Vera V.A."/>
            <person name="Villasana D.M."/>
            <person name="Wang L."/>
            <person name="Ward-Moore S."/>
            <person name="Warren J.T."/>
            <person name="Wei X."/>
            <person name="White F."/>
            <person name="Williamson A.L."/>
            <person name="Wleczyk R."/>
            <person name="Wooden H.S."/>
            <person name="Wooden S.H."/>
            <person name="Yen J."/>
            <person name="Yoon L."/>
            <person name="Yoon V."/>
            <person name="Zorrilla S.E."/>
            <person name="Nelson D."/>
            <person name="Kucherlapati R."/>
            <person name="Weinstock G."/>
            <person name="Gibbs R.A."/>
        </authorList>
    </citation>
    <scope>NUCLEOTIDE SEQUENCE [LARGE SCALE GENOMIC DNA]</scope>
</reference>
<comment type="function">
    <text evidence="1">Microtubule inner protein (MIP) part of the dynein-decorated doublet microtubules (DMTs) in flagellum axoneme. May serve to reinforce and thus stabilize the microtubule structure in the sperm flagella.</text>
</comment>
<comment type="subunit">
    <text evidence="1">Microtubule inner protein component of sperm flagellar doublet microtubules.</text>
</comment>
<comment type="subcellular location">
    <subcellularLocation>
        <location evidence="1">Cytoplasm</location>
        <location evidence="1">Cytoskeleton</location>
        <location evidence="1">Flagellum axoneme</location>
    </subcellularLocation>
    <text evidence="1">Localizes to the A-tubules of DMTs.</text>
</comment>
<organism>
    <name type="scientific">Homo sapiens</name>
    <name type="common">Human</name>
    <dbReference type="NCBI Taxonomy" id="9606"/>
    <lineage>
        <taxon>Eukaryota</taxon>
        <taxon>Metazoa</taxon>
        <taxon>Chordata</taxon>
        <taxon>Craniata</taxon>
        <taxon>Vertebrata</taxon>
        <taxon>Euteleostomi</taxon>
        <taxon>Mammalia</taxon>
        <taxon>Eutheria</taxon>
        <taxon>Euarchontoglires</taxon>
        <taxon>Primates</taxon>
        <taxon>Haplorrhini</taxon>
        <taxon>Catarrhini</taxon>
        <taxon>Hominidae</taxon>
        <taxon>Homo</taxon>
    </lineage>
</organism>
<gene>
    <name evidence="4" type="primary">SPMIP11</name>
    <name evidence="4" type="synonym">TEX49</name>
</gene>
<keyword id="KW-0966">Cell projection</keyword>
<keyword id="KW-0969">Cilium</keyword>
<keyword id="KW-0963">Cytoplasm</keyword>
<keyword id="KW-0206">Cytoskeleton</keyword>
<keyword id="KW-0282">Flagellum</keyword>
<keyword id="KW-1267">Proteomics identification</keyword>
<keyword id="KW-1185">Reference proteome</keyword>
<name>SMI11_HUMAN</name>